<dbReference type="EC" id="2.7.1.33" evidence="1"/>
<dbReference type="EMBL" id="CP000089">
    <property type="protein sequence ID" value="AAZ48485.1"/>
    <property type="molecule type" value="Genomic_DNA"/>
</dbReference>
<dbReference type="SMR" id="Q479J6"/>
<dbReference type="STRING" id="159087.Daro_3756"/>
<dbReference type="KEGG" id="dar:Daro_3756"/>
<dbReference type="eggNOG" id="COG1521">
    <property type="taxonomic scope" value="Bacteria"/>
</dbReference>
<dbReference type="HOGENOM" id="CLU_066627_0_0_4"/>
<dbReference type="OrthoDB" id="9781305at2"/>
<dbReference type="UniPathway" id="UPA00241">
    <property type="reaction ID" value="UER00352"/>
</dbReference>
<dbReference type="GO" id="GO:0005737">
    <property type="term" value="C:cytoplasm"/>
    <property type="evidence" value="ECO:0007669"/>
    <property type="project" value="UniProtKB-SubCell"/>
</dbReference>
<dbReference type="GO" id="GO:0005524">
    <property type="term" value="F:ATP binding"/>
    <property type="evidence" value="ECO:0007669"/>
    <property type="project" value="UniProtKB-UniRule"/>
</dbReference>
<dbReference type="GO" id="GO:0004594">
    <property type="term" value="F:pantothenate kinase activity"/>
    <property type="evidence" value="ECO:0007669"/>
    <property type="project" value="UniProtKB-UniRule"/>
</dbReference>
<dbReference type="GO" id="GO:0015937">
    <property type="term" value="P:coenzyme A biosynthetic process"/>
    <property type="evidence" value="ECO:0007669"/>
    <property type="project" value="UniProtKB-UniRule"/>
</dbReference>
<dbReference type="CDD" id="cd24015">
    <property type="entry name" value="ASKHA_NBD_PanK-III"/>
    <property type="match status" value="1"/>
</dbReference>
<dbReference type="Gene3D" id="3.30.420.40">
    <property type="match status" value="2"/>
</dbReference>
<dbReference type="HAMAP" id="MF_01274">
    <property type="entry name" value="Pantothen_kinase_3"/>
    <property type="match status" value="1"/>
</dbReference>
<dbReference type="InterPro" id="IPR043129">
    <property type="entry name" value="ATPase_NBD"/>
</dbReference>
<dbReference type="InterPro" id="IPR004619">
    <property type="entry name" value="Type_III_PanK"/>
</dbReference>
<dbReference type="NCBIfam" id="TIGR00671">
    <property type="entry name" value="baf"/>
    <property type="match status" value="1"/>
</dbReference>
<dbReference type="PANTHER" id="PTHR34265">
    <property type="entry name" value="TYPE III PANTOTHENATE KINASE"/>
    <property type="match status" value="1"/>
</dbReference>
<dbReference type="PANTHER" id="PTHR34265:SF1">
    <property type="entry name" value="TYPE III PANTOTHENATE KINASE"/>
    <property type="match status" value="1"/>
</dbReference>
<dbReference type="Pfam" id="PF03309">
    <property type="entry name" value="Pan_kinase"/>
    <property type="match status" value="1"/>
</dbReference>
<dbReference type="SUPFAM" id="SSF53067">
    <property type="entry name" value="Actin-like ATPase domain"/>
    <property type="match status" value="2"/>
</dbReference>
<evidence type="ECO:0000255" key="1">
    <source>
        <dbReference type="HAMAP-Rule" id="MF_01274"/>
    </source>
</evidence>
<protein>
    <recommendedName>
        <fullName evidence="1">Type III pantothenate kinase</fullName>
        <ecNumber evidence="1">2.7.1.33</ecNumber>
    </recommendedName>
    <alternativeName>
        <fullName evidence="1">PanK-III</fullName>
    </alternativeName>
    <alternativeName>
        <fullName evidence="1">Pantothenic acid kinase</fullName>
    </alternativeName>
</protein>
<comment type="function">
    <text evidence="1">Catalyzes the phosphorylation of pantothenate (Pan), the first step in CoA biosynthesis.</text>
</comment>
<comment type="catalytic activity">
    <reaction evidence="1">
        <text>(R)-pantothenate + ATP = (R)-4'-phosphopantothenate + ADP + H(+)</text>
        <dbReference type="Rhea" id="RHEA:16373"/>
        <dbReference type="ChEBI" id="CHEBI:10986"/>
        <dbReference type="ChEBI" id="CHEBI:15378"/>
        <dbReference type="ChEBI" id="CHEBI:29032"/>
        <dbReference type="ChEBI" id="CHEBI:30616"/>
        <dbReference type="ChEBI" id="CHEBI:456216"/>
        <dbReference type="EC" id="2.7.1.33"/>
    </reaction>
</comment>
<comment type="cofactor">
    <cofactor evidence="1">
        <name>NH4(+)</name>
        <dbReference type="ChEBI" id="CHEBI:28938"/>
    </cofactor>
    <cofactor evidence="1">
        <name>K(+)</name>
        <dbReference type="ChEBI" id="CHEBI:29103"/>
    </cofactor>
    <text evidence="1">A monovalent cation. Ammonium or potassium.</text>
</comment>
<comment type="pathway">
    <text evidence="1">Cofactor biosynthesis; coenzyme A biosynthesis; CoA from (R)-pantothenate: step 1/5.</text>
</comment>
<comment type="subunit">
    <text evidence="1">Homodimer.</text>
</comment>
<comment type="subcellular location">
    <subcellularLocation>
        <location evidence="1">Cytoplasm</location>
    </subcellularLocation>
</comment>
<comment type="similarity">
    <text evidence="1">Belongs to the type III pantothenate kinase family.</text>
</comment>
<keyword id="KW-0067">ATP-binding</keyword>
<keyword id="KW-0173">Coenzyme A biosynthesis</keyword>
<keyword id="KW-0963">Cytoplasm</keyword>
<keyword id="KW-0418">Kinase</keyword>
<keyword id="KW-0547">Nucleotide-binding</keyword>
<keyword id="KW-0630">Potassium</keyword>
<keyword id="KW-0808">Transferase</keyword>
<proteinExistence type="inferred from homology"/>
<gene>
    <name evidence="1" type="primary">coaX</name>
    <name type="ordered locus">Daro_3756</name>
</gene>
<sequence length="238" mass="25367">MIVCLDSGNTRIKWGVHDGVKWLAQGAVAHAEVGALSRLVAEWPLPEKVMLANVAGVEAGSRIREQLAAWAPVFHEVRPELRRCGVTNLYKSPERLGVDRWCALLGARSLVDSATVVVMAGTATTIDTLDADGNFLGGVIMPGIGLMLRSLAHGTAALPFADGEYATYPRCTDDAIVTGVIDAQAGAIERIFSRLDDPAASCLLSGGYAEQIAVHLVVRHRLADNLPLEGLRHLALKS</sequence>
<organism>
    <name type="scientific">Dechloromonas aromatica (strain RCB)</name>
    <dbReference type="NCBI Taxonomy" id="159087"/>
    <lineage>
        <taxon>Bacteria</taxon>
        <taxon>Pseudomonadati</taxon>
        <taxon>Pseudomonadota</taxon>
        <taxon>Betaproteobacteria</taxon>
        <taxon>Rhodocyclales</taxon>
        <taxon>Azonexaceae</taxon>
        <taxon>Dechloromonas</taxon>
    </lineage>
</organism>
<feature type="chain" id="PRO_0000270874" description="Type III pantothenate kinase">
    <location>
        <begin position="1"/>
        <end position="238"/>
    </location>
</feature>
<feature type="active site" description="Proton acceptor" evidence="1">
    <location>
        <position position="99"/>
    </location>
</feature>
<feature type="binding site" evidence="1">
    <location>
        <begin position="6"/>
        <end position="13"/>
    </location>
    <ligand>
        <name>ATP</name>
        <dbReference type="ChEBI" id="CHEBI:30616"/>
    </ligand>
</feature>
<feature type="binding site" evidence="1">
    <location>
        <position position="90"/>
    </location>
    <ligand>
        <name>substrate</name>
    </ligand>
</feature>
<feature type="binding site" evidence="1">
    <location>
        <begin position="97"/>
        <end position="100"/>
    </location>
    <ligand>
        <name>substrate</name>
    </ligand>
</feature>
<feature type="binding site" evidence="1">
    <location>
        <position position="122"/>
    </location>
    <ligand>
        <name>ATP</name>
        <dbReference type="ChEBI" id="CHEBI:30616"/>
    </ligand>
</feature>
<feature type="binding site" evidence="1">
    <location>
        <position position="172"/>
    </location>
    <ligand>
        <name>substrate</name>
    </ligand>
</feature>
<accession>Q479J6</accession>
<name>COAX_DECAR</name>
<reference key="1">
    <citation type="journal article" date="2009" name="BMC Genomics">
        <title>Metabolic analysis of the soil microbe Dechloromonas aromatica str. RCB: indications of a surprisingly complex life-style and cryptic anaerobic pathways for aromatic degradation.</title>
        <authorList>
            <person name="Salinero K.K."/>
            <person name="Keller K."/>
            <person name="Feil W.S."/>
            <person name="Feil H."/>
            <person name="Trong S."/>
            <person name="Di Bartolo G."/>
            <person name="Lapidus A."/>
        </authorList>
    </citation>
    <scope>NUCLEOTIDE SEQUENCE [LARGE SCALE GENOMIC DNA]</scope>
    <source>
        <strain>RCB</strain>
    </source>
</reference>